<accession>Q0HNW2</accession>
<reference key="1">
    <citation type="submission" date="2006-08" db="EMBL/GenBank/DDBJ databases">
        <title>Complete sequence of Shewanella sp. MR-4.</title>
        <authorList>
            <consortium name="US DOE Joint Genome Institute"/>
            <person name="Copeland A."/>
            <person name="Lucas S."/>
            <person name="Lapidus A."/>
            <person name="Barry K."/>
            <person name="Detter J.C."/>
            <person name="Glavina del Rio T."/>
            <person name="Hammon N."/>
            <person name="Israni S."/>
            <person name="Dalin E."/>
            <person name="Tice H."/>
            <person name="Pitluck S."/>
            <person name="Kiss H."/>
            <person name="Brettin T."/>
            <person name="Bruce D."/>
            <person name="Han C."/>
            <person name="Tapia R."/>
            <person name="Gilna P."/>
            <person name="Schmutz J."/>
            <person name="Larimer F."/>
            <person name="Land M."/>
            <person name="Hauser L."/>
            <person name="Kyrpides N."/>
            <person name="Mikhailova N."/>
            <person name="Nealson K."/>
            <person name="Konstantinidis K."/>
            <person name="Klappenbach J."/>
            <person name="Tiedje J."/>
            <person name="Richardson P."/>
        </authorList>
    </citation>
    <scope>NUCLEOTIDE SEQUENCE [LARGE SCALE GENOMIC DNA]</scope>
    <source>
        <strain>MR-4</strain>
    </source>
</reference>
<protein>
    <recommendedName>
        <fullName evidence="1">tRNA 2-selenouridine synthase</fullName>
        <ecNumber evidence="1">2.9.1.3</ecNumber>
    </recommendedName>
</protein>
<feature type="chain" id="PRO_0000292713" description="tRNA 2-selenouridine synthase">
    <location>
        <begin position="1"/>
        <end position="384"/>
    </location>
</feature>
<feature type="domain" description="Rhodanese" evidence="1">
    <location>
        <begin position="15"/>
        <end position="138"/>
    </location>
</feature>
<feature type="active site" description="S-selanylcysteine intermediate" evidence="1">
    <location>
        <position position="98"/>
    </location>
</feature>
<keyword id="KW-0711">Selenium</keyword>
<keyword id="KW-0808">Transferase</keyword>
<sequence length="384" mass="43684">MTTKLIPAQQYHDIFVAGKPLIDLRAPIEFDRGAFPSSVNLPLMVDKEREKVGTCYKEQGQQAAIALGHSLVHGVVKQQRIDAWLNFLSAHPQAYLYCFRGGLRSQLTQQWLQEAGVTVPYVQGGYKGMRQYLIGVIEAAPSLQPLLSLSGMTGSGKTDFLKRRKEAIDLEGIANHRGSSFGKNIDPQPTQINFENRLAIALLHHQLGNHACLLLEDESFLIGRSALPQSFYSAMQTADIVVLEEDDDIRLTRLLDEYVHKMHRGFIERLGLEAGFEAFSHYLLQSLGSIRKRLGGKQYQELQDIMQQALSQQLNQNQTSQHLAWISLLLHKYYDPMYEYQLQKKAGNILFRGSHQATHEWLDNYQRDNYHRNNDPLNSQHSKG</sequence>
<name>SELU_SHESM</name>
<comment type="function">
    <text evidence="1">Involved in the post-transcriptional modification of the uridine at the wobble position (U34) of tRNA(Lys), tRNA(Glu) and tRNA(Gln). Catalyzes the conversion of 2-thiouridine (S2U-RNA) to 2-selenouridine (Se2U-RNA). Acts in a two-step process involving geranylation of 2-thiouridine (S2U) to S-geranyl-2-thiouridine (geS2U) and subsequent selenation of the latter derivative to 2-selenouridine (Se2U) in the tRNA chain.</text>
</comment>
<comment type="catalytic activity">
    <reaction evidence="1">
        <text>5-methylaminomethyl-2-thiouridine(34) in tRNA + selenophosphate + (2E)-geranyl diphosphate + H2O + H(+) = 5-methylaminomethyl-2-selenouridine(34) in tRNA + (2E)-thiogeraniol + phosphate + diphosphate</text>
        <dbReference type="Rhea" id="RHEA:42716"/>
        <dbReference type="Rhea" id="RHEA-COMP:10195"/>
        <dbReference type="Rhea" id="RHEA-COMP:10196"/>
        <dbReference type="ChEBI" id="CHEBI:15377"/>
        <dbReference type="ChEBI" id="CHEBI:15378"/>
        <dbReference type="ChEBI" id="CHEBI:16144"/>
        <dbReference type="ChEBI" id="CHEBI:33019"/>
        <dbReference type="ChEBI" id="CHEBI:43474"/>
        <dbReference type="ChEBI" id="CHEBI:58057"/>
        <dbReference type="ChEBI" id="CHEBI:74455"/>
        <dbReference type="ChEBI" id="CHEBI:82743"/>
        <dbReference type="ChEBI" id="CHEBI:143703"/>
        <dbReference type="EC" id="2.9.1.3"/>
    </reaction>
    <physiologicalReaction direction="left-to-right" evidence="1">
        <dbReference type="Rhea" id="RHEA:42717"/>
    </physiologicalReaction>
</comment>
<comment type="catalytic activity">
    <reaction evidence="1">
        <text>5-methylaminomethyl-2-thiouridine(34) in tRNA + (2E)-geranyl diphosphate = 5-methylaminomethyl-S-(2E)-geranyl-thiouridine(34) in tRNA + diphosphate</text>
        <dbReference type="Rhea" id="RHEA:14085"/>
        <dbReference type="Rhea" id="RHEA-COMP:10195"/>
        <dbReference type="Rhea" id="RHEA-COMP:14654"/>
        <dbReference type="ChEBI" id="CHEBI:33019"/>
        <dbReference type="ChEBI" id="CHEBI:58057"/>
        <dbReference type="ChEBI" id="CHEBI:74455"/>
        <dbReference type="ChEBI" id="CHEBI:140632"/>
    </reaction>
    <physiologicalReaction direction="left-to-right" evidence="1">
        <dbReference type="Rhea" id="RHEA:14086"/>
    </physiologicalReaction>
</comment>
<comment type="catalytic activity">
    <reaction evidence="1">
        <text>5-methylaminomethyl-S-(2E)-geranyl-thiouridine(34) in tRNA + selenophosphate + H(+) = 5-methylaminomethyl-2-(Se-phospho)selenouridine(34) in tRNA + (2E)-thiogeraniol</text>
        <dbReference type="Rhea" id="RHEA:60172"/>
        <dbReference type="Rhea" id="RHEA-COMP:14654"/>
        <dbReference type="Rhea" id="RHEA-COMP:15523"/>
        <dbReference type="ChEBI" id="CHEBI:15378"/>
        <dbReference type="ChEBI" id="CHEBI:16144"/>
        <dbReference type="ChEBI" id="CHEBI:140632"/>
        <dbReference type="ChEBI" id="CHEBI:143702"/>
        <dbReference type="ChEBI" id="CHEBI:143703"/>
    </reaction>
    <physiologicalReaction direction="left-to-right" evidence="1">
        <dbReference type="Rhea" id="RHEA:60173"/>
    </physiologicalReaction>
</comment>
<comment type="catalytic activity">
    <reaction evidence="1">
        <text>5-methylaminomethyl-2-(Se-phospho)selenouridine(34) in tRNA + H2O = 5-methylaminomethyl-2-selenouridine(34) in tRNA + phosphate</text>
        <dbReference type="Rhea" id="RHEA:60176"/>
        <dbReference type="Rhea" id="RHEA-COMP:10196"/>
        <dbReference type="Rhea" id="RHEA-COMP:15523"/>
        <dbReference type="ChEBI" id="CHEBI:15377"/>
        <dbReference type="ChEBI" id="CHEBI:43474"/>
        <dbReference type="ChEBI" id="CHEBI:82743"/>
        <dbReference type="ChEBI" id="CHEBI:143702"/>
    </reaction>
    <physiologicalReaction direction="left-to-right" evidence="1">
        <dbReference type="Rhea" id="RHEA:60177"/>
    </physiologicalReaction>
</comment>
<comment type="subunit">
    <text evidence="1">Monomer.</text>
</comment>
<comment type="similarity">
    <text evidence="1">Belongs to the SelU family.</text>
</comment>
<gene>
    <name evidence="1" type="primary">selU</name>
    <name type="ordered locus">Shewmr4_0174</name>
</gene>
<dbReference type="EC" id="2.9.1.3" evidence="1"/>
<dbReference type="EMBL" id="CP000446">
    <property type="protein sequence ID" value="ABI37255.1"/>
    <property type="molecule type" value="Genomic_DNA"/>
</dbReference>
<dbReference type="RefSeq" id="WP_011621007.1">
    <property type="nucleotide sequence ID" value="NC_008321.1"/>
</dbReference>
<dbReference type="SMR" id="Q0HNW2"/>
<dbReference type="KEGG" id="she:Shewmr4_0174"/>
<dbReference type="HOGENOM" id="CLU_043456_1_0_6"/>
<dbReference type="GO" id="GO:0016765">
    <property type="term" value="F:transferase activity, transferring alkyl or aryl (other than methyl) groups"/>
    <property type="evidence" value="ECO:0007669"/>
    <property type="project" value="UniProtKB-UniRule"/>
</dbReference>
<dbReference type="GO" id="GO:0043828">
    <property type="term" value="F:tRNA 2-selenouridine synthase activity"/>
    <property type="evidence" value="ECO:0007669"/>
    <property type="project" value="UniProtKB-EC"/>
</dbReference>
<dbReference type="GO" id="GO:0002098">
    <property type="term" value="P:tRNA wobble uridine modification"/>
    <property type="evidence" value="ECO:0007669"/>
    <property type="project" value="UniProtKB-UniRule"/>
</dbReference>
<dbReference type="FunFam" id="3.40.250.10:FF:000009">
    <property type="entry name" value="tRNA 2-selenouridine/geranyl-2-thiouridine synthase"/>
    <property type="match status" value="1"/>
</dbReference>
<dbReference type="Gene3D" id="3.40.250.10">
    <property type="entry name" value="Rhodanese-like domain"/>
    <property type="match status" value="1"/>
</dbReference>
<dbReference type="HAMAP" id="MF_01622">
    <property type="entry name" value="tRNA_sel_U_synth"/>
    <property type="match status" value="1"/>
</dbReference>
<dbReference type="InterPro" id="IPR001763">
    <property type="entry name" value="Rhodanese-like_dom"/>
</dbReference>
<dbReference type="InterPro" id="IPR036873">
    <property type="entry name" value="Rhodanese-like_dom_sf"/>
</dbReference>
<dbReference type="InterPro" id="IPR017582">
    <property type="entry name" value="SelU"/>
</dbReference>
<dbReference type="NCBIfam" id="NF008751">
    <property type="entry name" value="PRK11784.1-3"/>
    <property type="match status" value="1"/>
</dbReference>
<dbReference type="NCBIfam" id="TIGR03167">
    <property type="entry name" value="tRNA_sel_U_synt"/>
    <property type="match status" value="1"/>
</dbReference>
<dbReference type="PANTHER" id="PTHR30401">
    <property type="entry name" value="TRNA 2-SELENOURIDINE SYNTHASE"/>
    <property type="match status" value="1"/>
</dbReference>
<dbReference type="PANTHER" id="PTHR30401:SF0">
    <property type="entry name" value="TRNA 2-SELENOURIDINE SYNTHASE"/>
    <property type="match status" value="1"/>
</dbReference>
<dbReference type="Pfam" id="PF00581">
    <property type="entry name" value="Rhodanese"/>
    <property type="match status" value="1"/>
</dbReference>
<dbReference type="SMART" id="SM00450">
    <property type="entry name" value="RHOD"/>
    <property type="match status" value="1"/>
</dbReference>
<dbReference type="SUPFAM" id="SSF52821">
    <property type="entry name" value="Rhodanese/Cell cycle control phosphatase"/>
    <property type="match status" value="1"/>
</dbReference>
<dbReference type="PROSITE" id="PS50206">
    <property type="entry name" value="RHODANESE_3"/>
    <property type="match status" value="1"/>
</dbReference>
<evidence type="ECO:0000255" key="1">
    <source>
        <dbReference type="HAMAP-Rule" id="MF_01622"/>
    </source>
</evidence>
<organism>
    <name type="scientific">Shewanella sp. (strain MR-4)</name>
    <dbReference type="NCBI Taxonomy" id="60480"/>
    <lineage>
        <taxon>Bacteria</taxon>
        <taxon>Pseudomonadati</taxon>
        <taxon>Pseudomonadota</taxon>
        <taxon>Gammaproteobacteria</taxon>
        <taxon>Alteromonadales</taxon>
        <taxon>Shewanellaceae</taxon>
        <taxon>Shewanella</taxon>
    </lineage>
</organism>
<proteinExistence type="inferred from homology"/>